<organism>
    <name type="scientific">Enterococcus faecalis (strain ATCC 700802 / V583)</name>
    <dbReference type="NCBI Taxonomy" id="226185"/>
    <lineage>
        <taxon>Bacteria</taxon>
        <taxon>Bacillati</taxon>
        <taxon>Bacillota</taxon>
        <taxon>Bacilli</taxon>
        <taxon>Lactobacillales</taxon>
        <taxon>Enterococcaceae</taxon>
        <taxon>Enterococcus</taxon>
    </lineage>
</organism>
<accession>Q839C6</accession>
<feature type="chain" id="PRO_0000110315" description="NAD-dependent protein deacetylase">
    <location>
        <begin position="1"/>
        <end position="237"/>
    </location>
</feature>
<feature type="domain" description="Deacetylase sirtuin-type" evidence="2">
    <location>
        <begin position="1"/>
        <end position="237"/>
    </location>
</feature>
<feature type="active site" description="Proton acceptor" evidence="2">
    <location>
        <position position="118"/>
    </location>
</feature>
<feature type="binding site" evidence="1">
    <location>
        <position position="25"/>
    </location>
    <ligand>
        <name>NAD(+)</name>
        <dbReference type="ChEBI" id="CHEBI:57540"/>
    </ligand>
</feature>
<feature type="binding site" evidence="1">
    <location>
        <position position="29"/>
    </location>
    <ligand>
        <name>NAD(+)</name>
        <dbReference type="ChEBI" id="CHEBI:57540"/>
    </ligand>
</feature>
<feature type="binding site" evidence="1">
    <location>
        <position position="37"/>
    </location>
    <ligand>
        <name>NAD(+)</name>
        <dbReference type="ChEBI" id="CHEBI:57540"/>
    </ligand>
</feature>
<feature type="binding site" evidence="1">
    <location>
        <position position="100"/>
    </location>
    <ligand>
        <name>NAD(+)</name>
        <dbReference type="ChEBI" id="CHEBI:57540"/>
    </ligand>
</feature>
<feature type="binding site" evidence="1">
    <location>
        <position position="102"/>
    </location>
    <ligand>
        <name>NAD(+)</name>
        <dbReference type="ChEBI" id="CHEBI:57540"/>
    </ligand>
</feature>
<feature type="binding site" evidence="1">
    <location>
        <position position="102"/>
    </location>
    <ligand>
        <name>nicotinamide</name>
        <dbReference type="ChEBI" id="CHEBI:17154"/>
    </ligand>
</feature>
<feature type="binding site" evidence="1">
    <location>
        <position position="103"/>
    </location>
    <ligand>
        <name>NAD(+)</name>
        <dbReference type="ChEBI" id="CHEBI:57540"/>
    </ligand>
</feature>
<feature type="binding site" evidence="1">
    <location>
        <position position="103"/>
    </location>
    <ligand>
        <name>nicotinamide</name>
        <dbReference type="ChEBI" id="CHEBI:17154"/>
    </ligand>
</feature>
<feature type="binding site" evidence="1">
    <location>
        <position position="118"/>
    </location>
    <ligand>
        <name>NAD(+)</name>
        <dbReference type="ChEBI" id="CHEBI:57540"/>
    </ligand>
</feature>
<feature type="binding site" evidence="2">
    <location>
        <position position="126"/>
    </location>
    <ligand>
        <name>Zn(2+)</name>
        <dbReference type="ChEBI" id="CHEBI:29105"/>
    </ligand>
</feature>
<feature type="binding site" evidence="2">
    <location>
        <position position="129"/>
    </location>
    <ligand>
        <name>Zn(2+)</name>
        <dbReference type="ChEBI" id="CHEBI:29105"/>
    </ligand>
</feature>
<feature type="binding site" evidence="2">
    <location>
        <position position="144"/>
    </location>
    <ligand>
        <name>Zn(2+)</name>
        <dbReference type="ChEBI" id="CHEBI:29105"/>
    </ligand>
</feature>
<feature type="binding site" evidence="1">
    <location>
        <position position="147"/>
    </location>
    <ligand>
        <name>Zn(2+)</name>
        <dbReference type="ChEBI" id="CHEBI:29105"/>
    </ligand>
</feature>
<feature type="binding site" evidence="1">
    <location>
        <position position="185"/>
    </location>
    <ligand>
        <name>NAD(+)</name>
        <dbReference type="ChEBI" id="CHEBI:57540"/>
    </ligand>
</feature>
<feature type="binding site" evidence="1">
    <location>
        <position position="186"/>
    </location>
    <ligand>
        <name>NAD(+)</name>
        <dbReference type="ChEBI" id="CHEBI:57540"/>
    </ligand>
</feature>
<feature type="binding site" evidence="1">
    <location>
        <position position="209"/>
    </location>
    <ligand>
        <name>NAD(+)</name>
        <dbReference type="ChEBI" id="CHEBI:57540"/>
    </ligand>
</feature>
<name>NPD_ENTFA</name>
<sequence length="237" mass="26766">MQDITQAEAIHWLATQQKITFLTGAGISTASGVPDYRSLKGVYQGIQQPEYLLSRTCLKTEPEKFYQFVKTLYHPDAQPNIIHQKMAQLEQMKRGKIVSQNIDGLHRKAGSQEVVDFHGNLYECYCQTCGATVPWQDYLLSDRHADCHGQIRPAITLYEEGLSEEAIEKAIQAVASADLIVIVGTSFQVHPFCDLIHYKQPTATILAINQTPLFLQQPYYFLEAKAETIFAELTIKE</sequence>
<dbReference type="EC" id="2.3.1.286" evidence="1 2"/>
<dbReference type="EMBL" id="AE016830">
    <property type="protein sequence ID" value="AAO80115.1"/>
    <property type="molecule type" value="Genomic_DNA"/>
</dbReference>
<dbReference type="RefSeq" id="NP_814044.1">
    <property type="nucleotide sequence ID" value="NC_004668.1"/>
</dbReference>
<dbReference type="RefSeq" id="WP_002381369.1">
    <property type="nucleotide sequence ID" value="NZ_KE136524.1"/>
</dbReference>
<dbReference type="SMR" id="Q839C6"/>
<dbReference type="STRING" id="226185.EF_0249"/>
<dbReference type="EnsemblBacteria" id="AAO80115">
    <property type="protein sequence ID" value="AAO80115"/>
    <property type="gene ID" value="EF_0249"/>
</dbReference>
<dbReference type="KEGG" id="efa:EF0249"/>
<dbReference type="PATRIC" id="fig|226185.45.peg.19"/>
<dbReference type="eggNOG" id="COG0846">
    <property type="taxonomic scope" value="Bacteria"/>
</dbReference>
<dbReference type="HOGENOM" id="CLU_023643_3_0_9"/>
<dbReference type="Proteomes" id="UP000001415">
    <property type="component" value="Chromosome"/>
</dbReference>
<dbReference type="GO" id="GO:0005737">
    <property type="term" value="C:cytoplasm"/>
    <property type="evidence" value="ECO:0007669"/>
    <property type="project" value="UniProtKB-SubCell"/>
</dbReference>
<dbReference type="GO" id="GO:0017136">
    <property type="term" value="F:histone deacetylase activity, NAD-dependent"/>
    <property type="evidence" value="ECO:0007669"/>
    <property type="project" value="TreeGrafter"/>
</dbReference>
<dbReference type="GO" id="GO:0046872">
    <property type="term" value="F:metal ion binding"/>
    <property type="evidence" value="ECO:0007669"/>
    <property type="project" value="UniProtKB-KW"/>
</dbReference>
<dbReference type="GO" id="GO:0070403">
    <property type="term" value="F:NAD+ binding"/>
    <property type="evidence" value="ECO:0007669"/>
    <property type="project" value="UniProtKB-UniRule"/>
</dbReference>
<dbReference type="CDD" id="cd01411">
    <property type="entry name" value="SIR2H"/>
    <property type="match status" value="1"/>
</dbReference>
<dbReference type="Gene3D" id="3.30.1600.10">
    <property type="entry name" value="SIR2/SIRT2 'Small Domain"/>
    <property type="match status" value="1"/>
</dbReference>
<dbReference type="Gene3D" id="3.40.50.1220">
    <property type="entry name" value="TPP-binding domain"/>
    <property type="match status" value="1"/>
</dbReference>
<dbReference type="HAMAP" id="MF_01968">
    <property type="entry name" value="Sirtuin_ClassU"/>
    <property type="match status" value="1"/>
</dbReference>
<dbReference type="InterPro" id="IPR029035">
    <property type="entry name" value="DHS-like_NAD/FAD-binding_dom"/>
</dbReference>
<dbReference type="InterPro" id="IPR050134">
    <property type="entry name" value="NAD-dep_sirtuin_deacylases"/>
</dbReference>
<dbReference type="InterPro" id="IPR003000">
    <property type="entry name" value="Sirtuin"/>
</dbReference>
<dbReference type="InterPro" id="IPR026591">
    <property type="entry name" value="Sirtuin_cat_small_dom_sf"/>
</dbReference>
<dbReference type="InterPro" id="IPR028628">
    <property type="entry name" value="Sirtuin_class_U"/>
</dbReference>
<dbReference type="InterPro" id="IPR026590">
    <property type="entry name" value="Ssirtuin_cat_dom"/>
</dbReference>
<dbReference type="NCBIfam" id="NF001752">
    <property type="entry name" value="PRK00481.1-1"/>
    <property type="match status" value="1"/>
</dbReference>
<dbReference type="PANTHER" id="PTHR11085:SF4">
    <property type="entry name" value="NAD-DEPENDENT PROTEIN DEACYLASE"/>
    <property type="match status" value="1"/>
</dbReference>
<dbReference type="PANTHER" id="PTHR11085">
    <property type="entry name" value="NAD-DEPENDENT PROTEIN DEACYLASE SIRTUIN-5, MITOCHONDRIAL-RELATED"/>
    <property type="match status" value="1"/>
</dbReference>
<dbReference type="Pfam" id="PF02146">
    <property type="entry name" value="SIR2"/>
    <property type="match status" value="1"/>
</dbReference>
<dbReference type="SUPFAM" id="SSF52467">
    <property type="entry name" value="DHS-like NAD/FAD-binding domain"/>
    <property type="match status" value="1"/>
</dbReference>
<dbReference type="PROSITE" id="PS50305">
    <property type="entry name" value="SIRTUIN"/>
    <property type="match status" value="1"/>
</dbReference>
<gene>
    <name evidence="1" type="primary">cobB</name>
    <name type="ordered locus">EF_0249</name>
</gene>
<reference key="1">
    <citation type="journal article" date="2003" name="Science">
        <title>Role of mobile DNA in the evolution of vancomycin-resistant Enterococcus faecalis.</title>
        <authorList>
            <person name="Paulsen I.T."/>
            <person name="Banerjei L."/>
            <person name="Myers G.S.A."/>
            <person name="Nelson K.E."/>
            <person name="Seshadri R."/>
            <person name="Read T.D."/>
            <person name="Fouts D.E."/>
            <person name="Eisen J.A."/>
            <person name="Gill S.R."/>
            <person name="Heidelberg J.F."/>
            <person name="Tettelin H."/>
            <person name="Dodson R.J."/>
            <person name="Umayam L.A."/>
            <person name="Brinkac L.M."/>
            <person name="Beanan M.J."/>
            <person name="Daugherty S.C."/>
            <person name="DeBoy R.T."/>
            <person name="Durkin S.A."/>
            <person name="Kolonay J.F."/>
            <person name="Madupu R."/>
            <person name="Nelson W.C."/>
            <person name="Vamathevan J.J."/>
            <person name="Tran B."/>
            <person name="Upton J."/>
            <person name="Hansen T."/>
            <person name="Shetty J."/>
            <person name="Khouri H.M."/>
            <person name="Utterback T.R."/>
            <person name="Radune D."/>
            <person name="Ketchum K.A."/>
            <person name="Dougherty B.A."/>
            <person name="Fraser C.M."/>
        </authorList>
    </citation>
    <scope>NUCLEOTIDE SEQUENCE [LARGE SCALE GENOMIC DNA]</scope>
    <source>
        <strain>ATCC 700802 / V583</strain>
    </source>
</reference>
<protein>
    <recommendedName>
        <fullName evidence="1">NAD-dependent protein deacetylase</fullName>
        <ecNumber evidence="1 2">2.3.1.286</ecNumber>
    </recommendedName>
    <alternativeName>
        <fullName evidence="1">Regulatory protein SIR2 homolog</fullName>
    </alternativeName>
</protein>
<comment type="function">
    <text evidence="1">NAD-dependent protein deacetylase which modulates the activities of several enzymes which are inactive in their acetylated form.</text>
</comment>
<comment type="catalytic activity">
    <reaction evidence="1">
        <text>N(6)-acetyl-L-lysyl-[protein] + NAD(+) + H2O = 2''-O-acetyl-ADP-D-ribose + nicotinamide + L-lysyl-[protein]</text>
        <dbReference type="Rhea" id="RHEA:43636"/>
        <dbReference type="Rhea" id="RHEA-COMP:9752"/>
        <dbReference type="Rhea" id="RHEA-COMP:10731"/>
        <dbReference type="ChEBI" id="CHEBI:15377"/>
        <dbReference type="ChEBI" id="CHEBI:17154"/>
        <dbReference type="ChEBI" id="CHEBI:29969"/>
        <dbReference type="ChEBI" id="CHEBI:57540"/>
        <dbReference type="ChEBI" id="CHEBI:61930"/>
        <dbReference type="ChEBI" id="CHEBI:83767"/>
        <dbReference type="EC" id="2.3.1.286"/>
    </reaction>
</comment>
<comment type="subcellular location">
    <subcellularLocation>
        <location evidence="1">Cytoplasm</location>
    </subcellularLocation>
</comment>
<comment type="similarity">
    <text evidence="1">Belongs to the sirtuin family. Class U subfamily.</text>
</comment>
<keyword id="KW-0963">Cytoplasm</keyword>
<keyword id="KW-0479">Metal-binding</keyword>
<keyword id="KW-0520">NAD</keyword>
<keyword id="KW-1185">Reference proteome</keyword>
<keyword id="KW-0808">Transferase</keyword>
<keyword id="KW-0862">Zinc</keyword>
<evidence type="ECO:0000255" key="1">
    <source>
        <dbReference type="HAMAP-Rule" id="MF_01968"/>
    </source>
</evidence>
<evidence type="ECO:0000255" key="2">
    <source>
        <dbReference type="PROSITE-ProRule" id="PRU00236"/>
    </source>
</evidence>
<proteinExistence type="inferred from homology"/>